<evidence type="ECO:0000255" key="1">
    <source>
        <dbReference type="HAMAP-Rule" id="MF_00522"/>
    </source>
</evidence>
<evidence type="ECO:0007829" key="2">
    <source>
        <dbReference type="PDB" id="7BLZ"/>
    </source>
</evidence>
<sequence length="38" mass="4407">MNLKKYLSTAPVVATLWLFLTAGILIELNRFFPDSLFY</sequence>
<gene>
    <name evidence="1" type="primary">psaJ</name>
</gene>
<comment type="function">
    <text evidence="1">May help in the organization of the PsaE and PsaF subunits.</text>
</comment>
<comment type="subcellular location">
    <subcellularLocation>
        <location evidence="1">Plastid</location>
        <location evidence="1">Chloroplast thylakoid membrane</location>
        <topology evidence="1">Single-pass membrane protein</topology>
    </subcellularLocation>
</comment>
<comment type="similarity">
    <text evidence="1">Belongs to the PsaJ family.</text>
</comment>
<keyword id="KW-0002">3D-structure</keyword>
<keyword id="KW-0150">Chloroplast</keyword>
<keyword id="KW-0472">Membrane</keyword>
<keyword id="KW-0602">Photosynthesis</keyword>
<keyword id="KW-0603">Photosystem I</keyword>
<keyword id="KW-0934">Plastid</keyword>
<keyword id="KW-1185">Reference proteome</keyword>
<keyword id="KW-0793">Thylakoid</keyword>
<keyword id="KW-0812">Transmembrane</keyword>
<keyword id="KW-1133">Transmembrane helix</keyword>
<name>PSAJ_CYAM1</name>
<accession>Q85FS8</accession>
<reference key="1">
    <citation type="journal article" date="2003" name="DNA Res.">
        <title>Complete sequence and analysis of the plastid genome of the unicellular red alga Cyanidioschyzon merolae.</title>
        <authorList>
            <person name="Ohta N."/>
            <person name="Matsuzaki M."/>
            <person name="Misumi O."/>
            <person name="Miyagishima S.-Y."/>
            <person name="Nozaki H."/>
            <person name="Tanaka K."/>
            <person name="Shin-i T."/>
            <person name="Kohara Y."/>
            <person name="Kuroiwa T."/>
        </authorList>
    </citation>
    <scope>NUCLEOTIDE SEQUENCE [LARGE SCALE GENOMIC DNA]</scope>
    <source>
        <strain>NIES-3377 / 10D</strain>
    </source>
</reference>
<proteinExistence type="evidence at protein level"/>
<organism>
    <name type="scientific">Cyanidioschyzon merolae (strain NIES-3377 / 10D)</name>
    <name type="common">Unicellular red alga</name>
    <dbReference type="NCBI Taxonomy" id="280699"/>
    <lineage>
        <taxon>Eukaryota</taxon>
        <taxon>Rhodophyta</taxon>
        <taxon>Bangiophyceae</taxon>
        <taxon>Cyanidiales</taxon>
        <taxon>Cyanidiaceae</taxon>
        <taxon>Cyanidioschyzon</taxon>
    </lineage>
</organism>
<geneLocation type="chloroplast"/>
<protein>
    <recommendedName>
        <fullName evidence="1">Photosystem I reaction center subunit IX</fullName>
    </recommendedName>
    <alternativeName>
        <fullName evidence="1">PSI-J</fullName>
    </alternativeName>
</protein>
<dbReference type="EMBL" id="AB002583">
    <property type="protein sequence ID" value="BAC76267.1"/>
    <property type="molecule type" value="Genomic_DNA"/>
</dbReference>
<dbReference type="RefSeq" id="NP_849105.1">
    <property type="nucleotide sequence ID" value="NC_004799.1"/>
</dbReference>
<dbReference type="PDB" id="5ZGB">
    <property type="method" value="EM"/>
    <property type="resolution" value="3.63 A"/>
    <property type="chains" value="J=1-38"/>
</dbReference>
<dbReference type="PDB" id="5ZGH">
    <property type="method" value="EM"/>
    <property type="resolution" value="3.82 A"/>
    <property type="chains" value="J=1-38"/>
</dbReference>
<dbReference type="PDB" id="6FOS">
    <property type="method" value="X-ray"/>
    <property type="resolution" value="4.00 A"/>
    <property type="chains" value="J=1-38"/>
</dbReference>
<dbReference type="PDB" id="7BLZ">
    <property type="method" value="EM"/>
    <property type="resolution" value="3.10 A"/>
    <property type="chains" value="J=1-38"/>
</dbReference>
<dbReference type="PDBsum" id="5ZGB"/>
<dbReference type="PDBsum" id="5ZGH"/>
<dbReference type="PDBsum" id="6FOS"/>
<dbReference type="PDBsum" id="7BLZ"/>
<dbReference type="EMDB" id="EMD-6929"/>
<dbReference type="SMR" id="Q85FS8"/>
<dbReference type="STRING" id="280699.Q85FS8"/>
<dbReference type="EnsemblPlants" id="CMV202CT">
    <property type="protein sequence ID" value="CMV202CT"/>
    <property type="gene ID" value="CMV202C"/>
</dbReference>
<dbReference type="GeneID" id="844942"/>
<dbReference type="Gramene" id="CMV202CT">
    <property type="protein sequence ID" value="CMV202CT"/>
    <property type="gene ID" value="CMV202C"/>
</dbReference>
<dbReference type="KEGG" id="cme:CymeCp173"/>
<dbReference type="HOGENOM" id="CLU_212133_1_1_1"/>
<dbReference type="Proteomes" id="UP000007014">
    <property type="component" value="Chloroplast"/>
</dbReference>
<dbReference type="GO" id="GO:0009535">
    <property type="term" value="C:chloroplast thylakoid membrane"/>
    <property type="evidence" value="ECO:0007669"/>
    <property type="project" value="UniProtKB-SubCell"/>
</dbReference>
<dbReference type="GO" id="GO:0009522">
    <property type="term" value="C:photosystem I"/>
    <property type="evidence" value="ECO:0007669"/>
    <property type="project" value="UniProtKB-KW"/>
</dbReference>
<dbReference type="GO" id="GO:0015979">
    <property type="term" value="P:photosynthesis"/>
    <property type="evidence" value="ECO:0007669"/>
    <property type="project" value="UniProtKB-UniRule"/>
</dbReference>
<dbReference type="Gene3D" id="1.20.5.510">
    <property type="entry name" value="Single helix bin"/>
    <property type="match status" value="1"/>
</dbReference>
<dbReference type="HAMAP" id="MF_00522">
    <property type="entry name" value="PSI_PsaJ"/>
    <property type="match status" value="1"/>
</dbReference>
<dbReference type="InterPro" id="IPR002615">
    <property type="entry name" value="PSI_PsaJ"/>
</dbReference>
<dbReference type="InterPro" id="IPR036062">
    <property type="entry name" value="PSI_PsaJ_sf"/>
</dbReference>
<dbReference type="NCBIfam" id="NF002743">
    <property type="entry name" value="PRK02733.1"/>
    <property type="match status" value="1"/>
</dbReference>
<dbReference type="PANTHER" id="PTHR36082">
    <property type="match status" value="1"/>
</dbReference>
<dbReference type="PANTHER" id="PTHR36082:SF2">
    <property type="entry name" value="PHOTOSYSTEM I REACTION CENTER SUBUNIT IX"/>
    <property type="match status" value="1"/>
</dbReference>
<dbReference type="Pfam" id="PF01701">
    <property type="entry name" value="PSI_PsaJ"/>
    <property type="match status" value="1"/>
</dbReference>
<dbReference type="SUPFAM" id="SSF81544">
    <property type="entry name" value="Subunit IX of photosystem I reaction centre, PsaJ"/>
    <property type="match status" value="1"/>
</dbReference>
<feature type="chain" id="PRO_0000354174" description="Photosystem I reaction center subunit IX">
    <location>
        <begin position="1"/>
        <end position="38"/>
    </location>
</feature>
<feature type="transmembrane region" description="Helical" evidence="1">
    <location>
        <begin position="6"/>
        <end position="26"/>
    </location>
</feature>
<feature type="helix" evidence="2">
    <location>
        <begin position="3"/>
        <end position="7"/>
    </location>
</feature>
<feature type="helix" evidence="2">
    <location>
        <begin position="10"/>
        <end position="31"/>
    </location>
</feature>